<sequence length="36" mass="4230">GDCHKFWGWCRDEPDPCCEHLTCSTKHGWCVWDGSF</sequence>
<feature type="chain" id="PRO_0000448841" description="Mu/kappa-theraphotoxin-Ap1a" evidence="2">
    <location>
        <begin position="1"/>
        <end position="36"/>
    </location>
</feature>
<feature type="modified residue" description="Phenylalanine amide" evidence="2">
    <location>
        <position position="36"/>
    </location>
</feature>
<feature type="disulfide bond" evidence="1">
    <location>
        <begin position="3"/>
        <end position="18"/>
    </location>
</feature>
<feature type="disulfide bond" evidence="1">
    <location>
        <begin position="10"/>
        <end position="23"/>
    </location>
</feature>
<feature type="disulfide bond" evidence="1">
    <location>
        <begin position="17"/>
        <end position="30"/>
    </location>
</feature>
<evidence type="ECO:0000250" key="1">
    <source>
        <dbReference type="UniProtKB" id="A0A3F2YLP5"/>
    </source>
</evidence>
<evidence type="ECO:0000269" key="2">
    <source>
    </source>
</evidence>
<evidence type="ECO:0000303" key="3">
    <source>
    </source>
</evidence>
<evidence type="ECO:0000305" key="4"/>
<evidence type="ECO:0000305" key="5">
    <source>
    </source>
</evidence>
<name>NTA_AVIPU</name>
<accession>P0DQJ6</accession>
<dbReference type="SMR" id="P0DQJ6"/>
<dbReference type="GO" id="GO:0005576">
    <property type="term" value="C:extracellular region"/>
    <property type="evidence" value="ECO:0007669"/>
    <property type="project" value="UniProtKB-SubCell"/>
</dbReference>
<dbReference type="GO" id="GO:0008200">
    <property type="term" value="F:ion channel inhibitor activity"/>
    <property type="evidence" value="ECO:0007669"/>
    <property type="project" value="InterPro"/>
</dbReference>
<dbReference type="GO" id="GO:0015459">
    <property type="term" value="F:potassium channel regulator activity"/>
    <property type="evidence" value="ECO:0007669"/>
    <property type="project" value="UniProtKB-KW"/>
</dbReference>
<dbReference type="GO" id="GO:0090729">
    <property type="term" value="F:toxin activity"/>
    <property type="evidence" value="ECO:0007669"/>
    <property type="project" value="UniProtKB-KW"/>
</dbReference>
<dbReference type="InterPro" id="IPR011696">
    <property type="entry name" value="Huwentoxin-1"/>
</dbReference>
<dbReference type="Pfam" id="PF07740">
    <property type="entry name" value="Toxin_12"/>
    <property type="match status" value="1"/>
</dbReference>
<dbReference type="SUPFAM" id="SSF57059">
    <property type="entry name" value="omega toxin-like"/>
    <property type="match status" value="1"/>
</dbReference>
<reference key="1">
    <citation type="journal article" date="2018" name="Biochem. Pharmacol.">
        <title>Novel venom-derived inhibitors of the human EAG channel, a putative antiepileptic drug target.</title>
        <authorList>
            <person name="Ma L."/>
            <person name="Chin Y.K.Y."/>
            <person name="Dekan Z."/>
            <person name="Herzig V."/>
            <person name="Chow C.Y."/>
            <person name="Heighway J."/>
            <person name="Lam S.W."/>
            <person name="Guillemin G.J."/>
            <person name="Alewood P.F."/>
            <person name="King G.F."/>
        </authorList>
    </citation>
    <scope>PROTEIN SEQUENCE</scope>
    <scope>FUNCTION</scope>
    <scope>SYNTHESIS</scope>
    <scope>AMIDATION AT PHE-36</scope>
    <scope>SUBCELLULAR LOCATION</scope>
    <scope>MASS SPECTROMETRY</scope>
    <scope>PHARMACEUTICAL</scope>
    <source>
        <tissue>Venom</tissue>
    </source>
</reference>
<comment type="function">
    <text evidence="2">Inhibitor of voltage-gated potassium and sodium channels. Among other potassium channels, it selectively inhibits Kv10.1/KCNH1/EAG1 (IC(50)=236 nM) by shifting the voltage dependence of channel activation in a depolarising direction, it shows a maximum inhibition of 80% at saturating concentrations, it shows fast on-rates, and is poorly reversible. It also slightly affects channel inactivation, when the membrane is highly depolarised (&gt;+80 mV). It shows similar potency on Nav1.7/SCN9A (IC(50)=222 nM) and lower potency on Nav1.2/SCN2A (IC(50)=519 nM).</text>
</comment>
<comment type="subcellular location">
    <subcellularLocation>
        <location evidence="2">Secreted</location>
    </subcellularLocation>
</comment>
<comment type="tissue specificity">
    <text evidence="5">Expressed by the venom gland.</text>
</comment>
<comment type="domain">
    <text evidence="5">The presence of a 'disulfide through disulfide knot' structurally defines this protein as a knottin.</text>
</comment>
<comment type="mass spectrometry" mass="4220.077" method="MALDI" evidence="2">
    <text>Monoisotopic mass.</text>
</comment>
<comment type="pharmaceutical">
    <text evidence="5">Could be used as informative lead for the development of novel antiepileptic drugs, as well as pharmacological tool for probing Kv10.1/KCNH1/EAG1 function.</text>
</comment>
<comment type="miscellaneous">
    <text evidence="2">Weakly inhibits Nav1.5/SCN5A (IC(50)=2565), and Kv11.1/KCNH2/ERG1 (IC(50)=8197 nM).</text>
</comment>
<comment type="similarity">
    <text evidence="4">Belongs to the neurotoxin 10 (Hwtx-1) family.</text>
</comment>
<comment type="online information" name="Protein Spotlight">
    <link uri="https://www.proteinspotlight.org/back_issues/267/"/>
    <text>Seizure - Issue 267 of March 2024</text>
</comment>
<organism>
    <name type="scientific">Avicularia purpurea</name>
    <name type="common">Ecuadorian purple pinktoe tarantula</name>
    <dbReference type="NCBI Taxonomy" id="2652666"/>
    <lineage>
        <taxon>Eukaryota</taxon>
        <taxon>Metazoa</taxon>
        <taxon>Ecdysozoa</taxon>
        <taxon>Arthropoda</taxon>
        <taxon>Chelicerata</taxon>
        <taxon>Arachnida</taxon>
        <taxon>Araneae</taxon>
        <taxon>Mygalomorphae</taxon>
        <taxon>Theraphosidae</taxon>
        <taxon>Avicularia</taxon>
    </lineage>
</organism>
<keyword id="KW-0027">Amidation</keyword>
<keyword id="KW-0903">Direct protein sequencing</keyword>
<keyword id="KW-1015">Disulfide bond</keyword>
<keyword id="KW-0872">Ion channel impairing toxin</keyword>
<keyword id="KW-0960">Knottin</keyword>
<keyword id="KW-0582">Pharmaceutical</keyword>
<keyword id="KW-0632">Potassium channel impairing toxin</keyword>
<keyword id="KW-0964">Secreted</keyword>
<keyword id="KW-0800">Toxin</keyword>
<keyword id="KW-1220">Voltage-gated potassium channel impairing toxin</keyword>
<proteinExistence type="evidence at protein level"/>
<protein>
    <recommendedName>
        <fullName evidence="3">Mu/kappa-theraphotoxin-Ap1a</fullName>
        <shortName evidence="3">Mu/kappa-TRTX-Ap1a</shortName>
    </recommendedName>
</protein>